<dbReference type="EMBL" id="EF380353">
    <property type="protein sequence ID" value="ABR01455.1"/>
    <property type="molecule type" value="Genomic_DNA"/>
</dbReference>
<dbReference type="RefSeq" id="YP_001294378.1">
    <property type="nucleotide sequence ID" value="NC_009601.1"/>
</dbReference>
<dbReference type="SMR" id="A6MMN3"/>
<dbReference type="GeneID" id="5236558"/>
<dbReference type="GO" id="GO:0009535">
    <property type="term" value="C:chloroplast thylakoid membrane"/>
    <property type="evidence" value="ECO:0007669"/>
    <property type="project" value="UniProtKB-SubCell"/>
</dbReference>
<dbReference type="GO" id="GO:0009523">
    <property type="term" value="C:photosystem II"/>
    <property type="evidence" value="ECO:0007669"/>
    <property type="project" value="UniProtKB-KW"/>
</dbReference>
<dbReference type="GO" id="GO:0016168">
    <property type="term" value="F:chlorophyll binding"/>
    <property type="evidence" value="ECO:0007669"/>
    <property type="project" value="UniProtKB-UniRule"/>
</dbReference>
<dbReference type="GO" id="GO:0045156">
    <property type="term" value="F:electron transporter, transferring electrons within the cyclic electron transport pathway of photosynthesis activity"/>
    <property type="evidence" value="ECO:0007669"/>
    <property type="project" value="InterPro"/>
</dbReference>
<dbReference type="GO" id="GO:0009772">
    <property type="term" value="P:photosynthetic electron transport in photosystem II"/>
    <property type="evidence" value="ECO:0007669"/>
    <property type="project" value="InterPro"/>
</dbReference>
<dbReference type="FunFam" id="3.10.680.10:FF:000001">
    <property type="entry name" value="Photosystem II CP47 reaction center protein"/>
    <property type="match status" value="1"/>
</dbReference>
<dbReference type="Gene3D" id="3.10.680.10">
    <property type="entry name" value="Photosystem II CP47 reaction center protein"/>
    <property type="match status" value="1"/>
</dbReference>
<dbReference type="HAMAP" id="MF_01495">
    <property type="entry name" value="PSII_PsbB_CP47"/>
    <property type="match status" value="1"/>
</dbReference>
<dbReference type="InterPro" id="IPR000932">
    <property type="entry name" value="PS_antenna-like"/>
</dbReference>
<dbReference type="InterPro" id="IPR036001">
    <property type="entry name" value="PS_II_antenna-like_sf"/>
</dbReference>
<dbReference type="InterPro" id="IPR017486">
    <property type="entry name" value="PSII_PsbB"/>
</dbReference>
<dbReference type="NCBIfam" id="TIGR03039">
    <property type="entry name" value="PS_II_CP47"/>
    <property type="match status" value="1"/>
</dbReference>
<dbReference type="PANTHER" id="PTHR33180">
    <property type="entry name" value="PHOTOSYSTEM II CP43 REACTION CENTER PROTEIN"/>
    <property type="match status" value="1"/>
</dbReference>
<dbReference type="PANTHER" id="PTHR33180:SF37">
    <property type="entry name" value="PHOTOSYSTEM II CP43 REACTION CENTER PROTEIN"/>
    <property type="match status" value="1"/>
</dbReference>
<dbReference type="Pfam" id="PF00421">
    <property type="entry name" value="PSII"/>
    <property type="match status" value="1"/>
</dbReference>
<dbReference type="SUPFAM" id="SSF161077">
    <property type="entry name" value="Photosystem II antenna protein-like"/>
    <property type="match status" value="1"/>
</dbReference>
<sequence length="508" mass="56146">MGLPWYRVHTVVLNDPGRLLSVHIMHTALVSGWAGSMALYELAVFDPSDPVLDPMWRQGMFVIPFMTRLGITNSWGGWSISGGSITNPGIWSYEGVAGAHIVFSGLCFLAAIWHWVYWDLEIFCDERTGKPSLDLPKIFGIHLFLSGLACFGFGAFHVTGLYGPGIWVSDPYGLTGKVQSINPAWGVEGFDPFVPGGIASHHIAAGTLGILAGLFHLSVRPPQRLYKGLRMGNIETVLSSSIAAVFFAAFVVAGTMWYGSATTPIELFGPTRYQWDQGYFQQEIYRRVGVGLAENLSLSEAWSKIPEKLAFYDYIGNNPAKGGLFRAGSMDNGDGIAVGWLGHPIFRDKEGRELFVRRMPTFFETFPVVLVDVDGIVRADVPFRRAESKYSVEQVGVTVEFYGGELNGVSYSDPTTVKKYARRAQLGEIFELDRATLKSDGVFRSSPRGWFTFGHASFALLFFFGHIWHGARTLFRDVFAGIDPDLDAQVEFGAFQKIGDPTTRRQAV</sequence>
<feature type="chain" id="PRO_0000359819" description="Photosystem II CP47 reaction center protein">
    <location>
        <begin position="1"/>
        <end position="508"/>
    </location>
</feature>
<feature type="transmembrane region" description="Helical" evidence="1">
    <location>
        <begin position="21"/>
        <end position="36"/>
    </location>
</feature>
<feature type="transmembrane region" description="Helical" evidence="1">
    <location>
        <begin position="101"/>
        <end position="115"/>
    </location>
</feature>
<feature type="transmembrane region" description="Helical" evidence="1">
    <location>
        <begin position="140"/>
        <end position="156"/>
    </location>
</feature>
<feature type="transmembrane region" description="Helical" evidence="1">
    <location>
        <begin position="203"/>
        <end position="218"/>
    </location>
</feature>
<feature type="transmembrane region" description="Helical" evidence="1">
    <location>
        <begin position="237"/>
        <end position="252"/>
    </location>
</feature>
<feature type="transmembrane region" description="Helical" evidence="1">
    <location>
        <begin position="457"/>
        <end position="472"/>
    </location>
</feature>
<organism>
    <name type="scientific">Dioscorea elephantipes</name>
    <name type="common">Elephant's foot yam</name>
    <name type="synonym">Testudinaria elephantipes</name>
    <dbReference type="NCBI Taxonomy" id="145284"/>
    <lineage>
        <taxon>Eukaryota</taxon>
        <taxon>Viridiplantae</taxon>
        <taxon>Streptophyta</taxon>
        <taxon>Embryophyta</taxon>
        <taxon>Tracheophyta</taxon>
        <taxon>Spermatophyta</taxon>
        <taxon>Magnoliopsida</taxon>
        <taxon>Liliopsida</taxon>
        <taxon>Dioscoreales</taxon>
        <taxon>Dioscoreaceae</taxon>
        <taxon>Dioscorea</taxon>
    </lineage>
</organism>
<keyword id="KW-0148">Chlorophyll</keyword>
<keyword id="KW-0150">Chloroplast</keyword>
<keyword id="KW-0157">Chromophore</keyword>
<keyword id="KW-0472">Membrane</keyword>
<keyword id="KW-0602">Photosynthesis</keyword>
<keyword id="KW-0604">Photosystem II</keyword>
<keyword id="KW-0934">Plastid</keyword>
<keyword id="KW-0793">Thylakoid</keyword>
<keyword id="KW-0812">Transmembrane</keyword>
<keyword id="KW-1133">Transmembrane helix</keyword>
<reference key="1">
    <citation type="journal article" date="2007" name="Mol. Phylogenet. Evol.">
        <title>Phylogenetic and evolutionary implications of complete chloroplast genome sequences of four early-diverging angiosperms: Buxus (Buxaceae), Chloranthus (Chloranthaceae), Dioscorea (Dioscoreaceae), and Illicium (Schisandraceae).</title>
        <authorList>
            <person name="Hansen D.R."/>
            <person name="Dastidar S.G."/>
            <person name="Cai Z."/>
            <person name="Penaflor C."/>
            <person name="Kuehl J.V."/>
            <person name="Boore J.L."/>
            <person name="Jansen R.K."/>
        </authorList>
    </citation>
    <scope>NUCLEOTIDE SEQUENCE [LARGE SCALE GENOMIC DNA]</scope>
</reference>
<protein>
    <recommendedName>
        <fullName evidence="1">Photosystem II CP47 reaction center protein</fullName>
    </recommendedName>
    <alternativeName>
        <fullName evidence="1">PSII 47 kDa protein</fullName>
    </alternativeName>
    <alternativeName>
        <fullName evidence="1">Protein CP-47</fullName>
    </alternativeName>
</protein>
<comment type="function">
    <text evidence="1">One of the components of the core complex of photosystem II (PSII). It binds chlorophyll and helps catalyze the primary light-induced photochemical processes of PSII. PSII is a light-driven water:plastoquinone oxidoreductase, using light energy to abstract electrons from H(2)O, generating O(2) and a proton gradient subsequently used for ATP formation.</text>
</comment>
<comment type="cofactor">
    <text evidence="1">Binds multiple chlorophylls. PSII binds additional chlorophylls, carotenoids and specific lipids.</text>
</comment>
<comment type="subunit">
    <text evidence="1">PSII is composed of 1 copy each of membrane proteins PsbA, PsbB, PsbC, PsbD, PsbE, PsbF, PsbH, PsbI, PsbJ, PsbK, PsbL, PsbM, PsbT, PsbX, PsbY, PsbZ, Psb30/Ycf12, at least 3 peripheral proteins of the oxygen-evolving complex and a large number of cofactors. It forms dimeric complexes.</text>
</comment>
<comment type="subcellular location">
    <subcellularLocation>
        <location evidence="1">Plastid</location>
        <location evidence="1">Chloroplast thylakoid membrane</location>
        <topology evidence="1">Multi-pass membrane protein</topology>
    </subcellularLocation>
</comment>
<comment type="similarity">
    <text evidence="1">Belongs to the PsbB/PsbC family. PsbB subfamily.</text>
</comment>
<accession>A6MMN3</accession>
<name>PSBB_DIOEL</name>
<evidence type="ECO:0000255" key="1">
    <source>
        <dbReference type="HAMAP-Rule" id="MF_01495"/>
    </source>
</evidence>
<gene>
    <name evidence="1" type="primary">psbB</name>
</gene>
<geneLocation type="chloroplast"/>
<proteinExistence type="inferred from homology"/>